<keyword id="KW-0687">Ribonucleoprotein</keyword>
<keyword id="KW-0689">Ribosomal protein</keyword>
<dbReference type="EMBL" id="FM204883">
    <property type="protein sequence ID" value="CAW93358.1"/>
    <property type="molecule type" value="Genomic_DNA"/>
</dbReference>
<dbReference type="RefSeq" id="WP_012515383.1">
    <property type="nucleotide sequence ID" value="NC_012471.1"/>
</dbReference>
<dbReference type="SMR" id="C0MC10"/>
<dbReference type="KEGG" id="seu:SEQ_0874"/>
<dbReference type="HOGENOM" id="CLU_114306_2_1_9"/>
<dbReference type="OrthoDB" id="9803251at2"/>
<dbReference type="Proteomes" id="UP000001365">
    <property type="component" value="Chromosome"/>
</dbReference>
<dbReference type="GO" id="GO:1990904">
    <property type="term" value="C:ribonucleoprotein complex"/>
    <property type="evidence" value="ECO:0007669"/>
    <property type="project" value="UniProtKB-KW"/>
</dbReference>
<dbReference type="GO" id="GO:0005840">
    <property type="term" value="C:ribosome"/>
    <property type="evidence" value="ECO:0007669"/>
    <property type="project" value="UniProtKB-KW"/>
</dbReference>
<dbReference type="GO" id="GO:0003735">
    <property type="term" value="F:structural constituent of ribosome"/>
    <property type="evidence" value="ECO:0007669"/>
    <property type="project" value="InterPro"/>
</dbReference>
<dbReference type="GO" id="GO:0006412">
    <property type="term" value="P:translation"/>
    <property type="evidence" value="ECO:0007669"/>
    <property type="project" value="UniProtKB-UniRule"/>
</dbReference>
<dbReference type="Gene3D" id="4.10.830.30">
    <property type="entry name" value="Ribosomal protein L31"/>
    <property type="match status" value="1"/>
</dbReference>
<dbReference type="HAMAP" id="MF_00502">
    <property type="entry name" value="Ribosomal_bL31_2"/>
    <property type="match status" value="1"/>
</dbReference>
<dbReference type="InterPro" id="IPR034704">
    <property type="entry name" value="Ribosomal_bL28/bL31-like_sf"/>
</dbReference>
<dbReference type="InterPro" id="IPR002150">
    <property type="entry name" value="Ribosomal_bL31"/>
</dbReference>
<dbReference type="InterPro" id="IPR027493">
    <property type="entry name" value="Ribosomal_bL31_B"/>
</dbReference>
<dbReference type="InterPro" id="IPR042105">
    <property type="entry name" value="Ribosomal_bL31_sf"/>
</dbReference>
<dbReference type="NCBIfam" id="TIGR00105">
    <property type="entry name" value="L31"/>
    <property type="match status" value="1"/>
</dbReference>
<dbReference type="NCBIfam" id="NF002462">
    <property type="entry name" value="PRK01678.1"/>
    <property type="match status" value="1"/>
</dbReference>
<dbReference type="PANTHER" id="PTHR33280">
    <property type="entry name" value="50S RIBOSOMAL PROTEIN L31, CHLOROPLASTIC"/>
    <property type="match status" value="1"/>
</dbReference>
<dbReference type="PANTHER" id="PTHR33280:SF1">
    <property type="entry name" value="LARGE RIBOSOMAL SUBUNIT PROTEIN BL31C"/>
    <property type="match status" value="1"/>
</dbReference>
<dbReference type="Pfam" id="PF01197">
    <property type="entry name" value="Ribosomal_L31"/>
    <property type="match status" value="1"/>
</dbReference>
<dbReference type="PRINTS" id="PR01249">
    <property type="entry name" value="RIBOSOMALL31"/>
</dbReference>
<dbReference type="SUPFAM" id="SSF143800">
    <property type="entry name" value="L28p-like"/>
    <property type="match status" value="1"/>
</dbReference>
<dbReference type="PROSITE" id="PS01143">
    <property type="entry name" value="RIBOSOMAL_L31"/>
    <property type="match status" value="1"/>
</dbReference>
<protein>
    <recommendedName>
        <fullName evidence="1">Large ribosomal subunit protein bL31B</fullName>
    </recommendedName>
    <alternativeName>
        <fullName evidence="2">50S ribosomal protein L31 type B</fullName>
    </alternativeName>
</protein>
<reference key="1">
    <citation type="journal article" date="2009" name="PLoS Pathog.">
        <title>Genomic evidence for the evolution of Streptococcus equi: host restriction, increased virulence, and genetic exchange with human pathogens.</title>
        <authorList>
            <person name="Holden M.T.G."/>
            <person name="Heather Z."/>
            <person name="Paillot R."/>
            <person name="Steward K.F."/>
            <person name="Webb K."/>
            <person name="Ainslie F."/>
            <person name="Jourdan T."/>
            <person name="Bason N.C."/>
            <person name="Holroyd N.E."/>
            <person name="Mungall K."/>
            <person name="Quail M.A."/>
            <person name="Sanders M."/>
            <person name="Simmonds M."/>
            <person name="Willey D."/>
            <person name="Brooks K."/>
            <person name="Aanensen D.M."/>
            <person name="Spratt B.G."/>
            <person name="Jolley K.A."/>
            <person name="Maiden M.C.J."/>
            <person name="Kehoe M."/>
            <person name="Chanter N."/>
            <person name="Bentley S.D."/>
            <person name="Robinson C."/>
            <person name="Maskell D.J."/>
            <person name="Parkhill J."/>
            <person name="Waller A.S."/>
        </authorList>
    </citation>
    <scope>NUCLEOTIDE SEQUENCE [LARGE SCALE GENOMIC DNA]</scope>
    <source>
        <strain>4047</strain>
    </source>
</reference>
<organism>
    <name type="scientific">Streptococcus equi subsp. equi (strain 4047)</name>
    <dbReference type="NCBI Taxonomy" id="553482"/>
    <lineage>
        <taxon>Bacteria</taxon>
        <taxon>Bacillati</taxon>
        <taxon>Bacillota</taxon>
        <taxon>Bacilli</taxon>
        <taxon>Lactobacillales</taxon>
        <taxon>Streptococcaceae</taxon>
        <taxon>Streptococcus</taxon>
    </lineage>
</organism>
<name>RL31B_STRE4</name>
<feature type="chain" id="PRO_1000176993" description="Large ribosomal subunit protein bL31B">
    <location>
        <begin position="1"/>
        <end position="86"/>
    </location>
</feature>
<accession>C0MC10</accession>
<comment type="subunit">
    <text evidence="1">Part of the 50S ribosomal subunit.</text>
</comment>
<comment type="similarity">
    <text evidence="1">Belongs to the bacterial ribosomal protein bL31 family. Type B subfamily.</text>
</comment>
<evidence type="ECO:0000255" key="1">
    <source>
        <dbReference type="HAMAP-Rule" id="MF_00502"/>
    </source>
</evidence>
<evidence type="ECO:0000305" key="2"/>
<sequence>MRKDIHPDYRPVVFLDTTTGYKFLSGSTKTSKETIEFEGETYPLVRVEISSDSHPFYTGRQKFTQADGRVDRFNKKYGLKDANAAK</sequence>
<gene>
    <name evidence="1" type="primary">rpmE2</name>
    <name type="ordered locus">SEQ_0874</name>
</gene>
<proteinExistence type="inferred from homology"/>